<name>YQGF_LEUMM</name>
<feature type="chain" id="PRO_1000061533" description="Putative pre-16S rRNA nuclease">
    <location>
        <begin position="1"/>
        <end position="143"/>
    </location>
</feature>
<keyword id="KW-0963">Cytoplasm</keyword>
<keyword id="KW-0378">Hydrolase</keyword>
<keyword id="KW-0540">Nuclease</keyword>
<keyword id="KW-1185">Reference proteome</keyword>
<keyword id="KW-0690">Ribosome biogenesis</keyword>
<gene>
    <name type="ordered locus">LEUM_0558</name>
</gene>
<dbReference type="EC" id="3.1.-.-" evidence="1"/>
<dbReference type="EMBL" id="CP000414">
    <property type="protein sequence ID" value="ABJ61672.1"/>
    <property type="molecule type" value="Genomic_DNA"/>
</dbReference>
<dbReference type="RefSeq" id="WP_011679383.1">
    <property type="nucleotide sequence ID" value="NC_008531.1"/>
</dbReference>
<dbReference type="SMR" id="Q03YQ0"/>
<dbReference type="EnsemblBacteria" id="ABJ61672">
    <property type="protein sequence ID" value="ABJ61672"/>
    <property type="gene ID" value="LEUM_0558"/>
</dbReference>
<dbReference type="GeneID" id="29576933"/>
<dbReference type="KEGG" id="lme:LEUM_0558"/>
<dbReference type="eggNOG" id="COG0816">
    <property type="taxonomic scope" value="Bacteria"/>
</dbReference>
<dbReference type="HOGENOM" id="CLU_098240_2_0_9"/>
<dbReference type="Proteomes" id="UP000000362">
    <property type="component" value="Chromosome"/>
</dbReference>
<dbReference type="GO" id="GO:0005829">
    <property type="term" value="C:cytosol"/>
    <property type="evidence" value="ECO:0007669"/>
    <property type="project" value="TreeGrafter"/>
</dbReference>
<dbReference type="GO" id="GO:0004518">
    <property type="term" value="F:nuclease activity"/>
    <property type="evidence" value="ECO:0007669"/>
    <property type="project" value="UniProtKB-KW"/>
</dbReference>
<dbReference type="GO" id="GO:0000967">
    <property type="term" value="P:rRNA 5'-end processing"/>
    <property type="evidence" value="ECO:0007669"/>
    <property type="project" value="UniProtKB-UniRule"/>
</dbReference>
<dbReference type="CDD" id="cd16964">
    <property type="entry name" value="YqgF"/>
    <property type="match status" value="1"/>
</dbReference>
<dbReference type="Gene3D" id="3.30.420.140">
    <property type="entry name" value="YqgF/RNase H-like domain"/>
    <property type="match status" value="1"/>
</dbReference>
<dbReference type="HAMAP" id="MF_00651">
    <property type="entry name" value="Nuclease_YqgF"/>
    <property type="match status" value="1"/>
</dbReference>
<dbReference type="InterPro" id="IPR012337">
    <property type="entry name" value="RNaseH-like_sf"/>
</dbReference>
<dbReference type="InterPro" id="IPR005227">
    <property type="entry name" value="YqgF"/>
</dbReference>
<dbReference type="InterPro" id="IPR006641">
    <property type="entry name" value="YqgF/RNaseH-like_dom"/>
</dbReference>
<dbReference type="InterPro" id="IPR037027">
    <property type="entry name" value="YqgF/RNaseH-like_dom_sf"/>
</dbReference>
<dbReference type="NCBIfam" id="TIGR00250">
    <property type="entry name" value="RNAse_H_YqgF"/>
    <property type="match status" value="1"/>
</dbReference>
<dbReference type="PANTHER" id="PTHR33317">
    <property type="entry name" value="POLYNUCLEOTIDYL TRANSFERASE, RIBONUCLEASE H-LIKE SUPERFAMILY PROTEIN"/>
    <property type="match status" value="1"/>
</dbReference>
<dbReference type="PANTHER" id="PTHR33317:SF4">
    <property type="entry name" value="POLYNUCLEOTIDYL TRANSFERASE, RIBONUCLEASE H-LIKE SUPERFAMILY PROTEIN"/>
    <property type="match status" value="1"/>
</dbReference>
<dbReference type="Pfam" id="PF03652">
    <property type="entry name" value="RuvX"/>
    <property type="match status" value="1"/>
</dbReference>
<dbReference type="SMART" id="SM00732">
    <property type="entry name" value="YqgFc"/>
    <property type="match status" value="1"/>
</dbReference>
<dbReference type="SUPFAM" id="SSF53098">
    <property type="entry name" value="Ribonuclease H-like"/>
    <property type="match status" value="1"/>
</dbReference>
<evidence type="ECO:0000255" key="1">
    <source>
        <dbReference type="HAMAP-Rule" id="MF_00651"/>
    </source>
</evidence>
<accession>Q03YQ0</accession>
<proteinExistence type="inferred from homology"/>
<sequence>MRILGLDVGSRTVGVSVSDPMGWTAQGVEIIRINEDEKEFGIDRLGEIIKEKNATGVVLGLPKNMNNSEGPRAEASRNYAKLIEKTFGLPTDFQDERLTTVEAERMLIEEANISRKKRKKVIDKIAAEFILQNYLDSKGKLTK</sequence>
<comment type="function">
    <text evidence="1">Could be a nuclease involved in processing of the 5'-end of pre-16S rRNA.</text>
</comment>
<comment type="subcellular location">
    <subcellularLocation>
        <location evidence="1">Cytoplasm</location>
    </subcellularLocation>
</comment>
<comment type="similarity">
    <text evidence="1">Belongs to the YqgF nuclease family.</text>
</comment>
<organism>
    <name type="scientific">Leuconostoc mesenteroides subsp. mesenteroides (strain ATCC 8293 / DSM 20343 / BCRC 11652 / CCM 1803 / JCM 6124 / NCDO 523 / NBRC 100496 / NCIMB 8023 / NCTC 12954 / NRRL B-1118 / 37Y)</name>
    <dbReference type="NCBI Taxonomy" id="203120"/>
    <lineage>
        <taxon>Bacteria</taxon>
        <taxon>Bacillati</taxon>
        <taxon>Bacillota</taxon>
        <taxon>Bacilli</taxon>
        <taxon>Lactobacillales</taxon>
        <taxon>Lactobacillaceae</taxon>
        <taxon>Leuconostoc</taxon>
    </lineage>
</organism>
<reference key="1">
    <citation type="journal article" date="2006" name="Proc. Natl. Acad. Sci. U.S.A.">
        <title>Comparative genomics of the lactic acid bacteria.</title>
        <authorList>
            <person name="Makarova K.S."/>
            <person name="Slesarev A."/>
            <person name="Wolf Y.I."/>
            <person name="Sorokin A."/>
            <person name="Mirkin B."/>
            <person name="Koonin E.V."/>
            <person name="Pavlov A."/>
            <person name="Pavlova N."/>
            <person name="Karamychev V."/>
            <person name="Polouchine N."/>
            <person name="Shakhova V."/>
            <person name="Grigoriev I."/>
            <person name="Lou Y."/>
            <person name="Rohksar D."/>
            <person name="Lucas S."/>
            <person name="Huang K."/>
            <person name="Goodstein D.M."/>
            <person name="Hawkins T."/>
            <person name="Plengvidhya V."/>
            <person name="Welker D."/>
            <person name="Hughes J."/>
            <person name="Goh Y."/>
            <person name="Benson A."/>
            <person name="Baldwin K."/>
            <person name="Lee J.-H."/>
            <person name="Diaz-Muniz I."/>
            <person name="Dosti B."/>
            <person name="Smeianov V."/>
            <person name="Wechter W."/>
            <person name="Barabote R."/>
            <person name="Lorca G."/>
            <person name="Altermann E."/>
            <person name="Barrangou R."/>
            <person name="Ganesan B."/>
            <person name="Xie Y."/>
            <person name="Rawsthorne H."/>
            <person name="Tamir D."/>
            <person name="Parker C."/>
            <person name="Breidt F."/>
            <person name="Broadbent J.R."/>
            <person name="Hutkins R."/>
            <person name="O'Sullivan D."/>
            <person name="Steele J."/>
            <person name="Unlu G."/>
            <person name="Saier M.H. Jr."/>
            <person name="Klaenhammer T."/>
            <person name="Richardson P."/>
            <person name="Kozyavkin S."/>
            <person name="Weimer B.C."/>
            <person name="Mills D.A."/>
        </authorList>
    </citation>
    <scope>NUCLEOTIDE SEQUENCE [LARGE SCALE GENOMIC DNA]</scope>
    <source>
        <strain>ATCC 8293 / DSM 20343 / BCRC 11652 / CCM 1803 / JCM 6124 / NCDO 523 / NBRC 100496 / NCIMB 8023 / NCTC 12954 / NRRL B-1118 / 37Y</strain>
    </source>
</reference>
<protein>
    <recommendedName>
        <fullName evidence="1">Putative pre-16S rRNA nuclease</fullName>
        <ecNumber evidence="1">3.1.-.-</ecNumber>
    </recommendedName>
</protein>